<protein>
    <recommendedName>
        <fullName>Hemoglobin subunit gamma</fullName>
    </recommendedName>
    <alternativeName>
        <fullName>Gamma-globin</fullName>
    </alternativeName>
    <alternativeName>
        <fullName>Hemoglobin gamma chain</fullName>
    </alternativeName>
</protein>
<evidence type="ECO:0000255" key="1">
    <source>
        <dbReference type="PROSITE-ProRule" id="PRU00238"/>
    </source>
</evidence>
<evidence type="ECO:0000269" key="2">
    <source>
    </source>
</evidence>
<accession>P68078</accession>
<accession>P02098</accession>
<organism>
    <name type="scientific">Macaca fuscata fuscata</name>
    <name type="common">Japanese macaque</name>
    <dbReference type="NCBI Taxonomy" id="9543"/>
    <lineage>
        <taxon>Eukaryota</taxon>
        <taxon>Metazoa</taxon>
        <taxon>Chordata</taxon>
        <taxon>Craniata</taxon>
        <taxon>Vertebrata</taxon>
        <taxon>Euteleostomi</taxon>
        <taxon>Mammalia</taxon>
        <taxon>Eutheria</taxon>
        <taxon>Euarchontoglires</taxon>
        <taxon>Primates</taxon>
        <taxon>Haplorrhini</taxon>
        <taxon>Catarrhini</taxon>
        <taxon>Cercopithecidae</taxon>
        <taxon>Cercopithecinae</taxon>
        <taxon>Macaca</taxon>
    </lineage>
</organism>
<sequence length="147" mass="16101">MGHFTEEDKATITSLWGKVNVEDAGGETLGRLLVVYPWTQRFFDSFGNLSSASAIMGNPKVKAHGKKVLTSLGDAIKNLDDLKGTFAQLSELHCDKLHVDPENFRLLGNVLVTVLAIHFGKEFTPEVQASWQKMVAGVASALSSRYH</sequence>
<gene>
    <name type="primary">HBG</name>
</gene>
<reference key="1">
    <citation type="journal article" date="1986" name="Hemoglobin">
        <title>Complete amino acid sequence of gamma chain of fetal hemoglobin of Japanese macaque (Macaca fuscata).</title>
        <authorList>
            <person name="Takenaka A."/>
            <person name="Takenaka O."/>
            <person name="Ohuchi M."/>
            <person name="Nakamura S."/>
            <person name="Takahashi K."/>
        </authorList>
    </citation>
    <scope>PROTEIN SEQUENCE OF 2-147</scope>
</reference>
<name>HBG_MACFU</name>
<comment type="function">
    <text>Gamma chains make up the fetal hemoglobin F, in combination with alpha chains.</text>
</comment>
<comment type="subunit">
    <text>Heterotetramer of two alpha chains and two gamma chains in fetal hemoglobin (Hb F).</text>
</comment>
<comment type="tissue specificity">
    <text>Red blood cells.</text>
</comment>
<comment type="similarity">
    <text evidence="1">Belongs to the globin family.</text>
</comment>
<dbReference type="PIR" id="A02415">
    <property type="entry name" value="HGMQJ"/>
</dbReference>
<dbReference type="SMR" id="P68078"/>
<dbReference type="GO" id="GO:0072562">
    <property type="term" value="C:blood microparticle"/>
    <property type="evidence" value="ECO:0007669"/>
    <property type="project" value="TreeGrafter"/>
</dbReference>
<dbReference type="GO" id="GO:0031838">
    <property type="term" value="C:haptoglobin-hemoglobin complex"/>
    <property type="evidence" value="ECO:0007669"/>
    <property type="project" value="TreeGrafter"/>
</dbReference>
<dbReference type="GO" id="GO:0005833">
    <property type="term" value="C:hemoglobin complex"/>
    <property type="evidence" value="ECO:0007669"/>
    <property type="project" value="InterPro"/>
</dbReference>
<dbReference type="GO" id="GO:0031720">
    <property type="term" value="F:haptoglobin binding"/>
    <property type="evidence" value="ECO:0007669"/>
    <property type="project" value="TreeGrafter"/>
</dbReference>
<dbReference type="GO" id="GO:0020037">
    <property type="term" value="F:heme binding"/>
    <property type="evidence" value="ECO:0007669"/>
    <property type="project" value="InterPro"/>
</dbReference>
<dbReference type="GO" id="GO:0031721">
    <property type="term" value="F:hemoglobin alpha binding"/>
    <property type="evidence" value="ECO:0007669"/>
    <property type="project" value="TreeGrafter"/>
</dbReference>
<dbReference type="GO" id="GO:0046872">
    <property type="term" value="F:metal ion binding"/>
    <property type="evidence" value="ECO:0007669"/>
    <property type="project" value="UniProtKB-KW"/>
</dbReference>
<dbReference type="GO" id="GO:0043177">
    <property type="term" value="F:organic acid binding"/>
    <property type="evidence" value="ECO:0007669"/>
    <property type="project" value="TreeGrafter"/>
</dbReference>
<dbReference type="GO" id="GO:0019825">
    <property type="term" value="F:oxygen binding"/>
    <property type="evidence" value="ECO:0007669"/>
    <property type="project" value="InterPro"/>
</dbReference>
<dbReference type="GO" id="GO:0005344">
    <property type="term" value="F:oxygen carrier activity"/>
    <property type="evidence" value="ECO:0007669"/>
    <property type="project" value="UniProtKB-KW"/>
</dbReference>
<dbReference type="GO" id="GO:0004601">
    <property type="term" value="F:peroxidase activity"/>
    <property type="evidence" value="ECO:0007669"/>
    <property type="project" value="TreeGrafter"/>
</dbReference>
<dbReference type="GO" id="GO:0042744">
    <property type="term" value="P:hydrogen peroxide catabolic process"/>
    <property type="evidence" value="ECO:0007669"/>
    <property type="project" value="TreeGrafter"/>
</dbReference>
<dbReference type="CDD" id="cd08925">
    <property type="entry name" value="Hb-beta-like"/>
    <property type="match status" value="1"/>
</dbReference>
<dbReference type="FunFam" id="1.10.490.10:FF:000001">
    <property type="entry name" value="Hemoglobin subunit beta"/>
    <property type="match status" value="1"/>
</dbReference>
<dbReference type="Gene3D" id="1.10.490.10">
    <property type="entry name" value="Globins"/>
    <property type="match status" value="1"/>
</dbReference>
<dbReference type="InterPro" id="IPR000971">
    <property type="entry name" value="Globin"/>
</dbReference>
<dbReference type="InterPro" id="IPR009050">
    <property type="entry name" value="Globin-like_sf"/>
</dbReference>
<dbReference type="InterPro" id="IPR012292">
    <property type="entry name" value="Globin/Proto"/>
</dbReference>
<dbReference type="InterPro" id="IPR002337">
    <property type="entry name" value="Hemoglobin_b"/>
</dbReference>
<dbReference type="InterPro" id="IPR050056">
    <property type="entry name" value="Hemoglobin_oxygen_transport"/>
</dbReference>
<dbReference type="PANTHER" id="PTHR11442">
    <property type="entry name" value="HEMOGLOBIN FAMILY MEMBER"/>
    <property type="match status" value="1"/>
</dbReference>
<dbReference type="PANTHER" id="PTHR11442:SF52">
    <property type="entry name" value="HEMOGLOBIN SUBUNIT GAMMA-1"/>
    <property type="match status" value="1"/>
</dbReference>
<dbReference type="Pfam" id="PF00042">
    <property type="entry name" value="Globin"/>
    <property type="match status" value="1"/>
</dbReference>
<dbReference type="PRINTS" id="PR00814">
    <property type="entry name" value="BETAHAEM"/>
</dbReference>
<dbReference type="SUPFAM" id="SSF46458">
    <property type="entry name" value="Globin-like"/>
    <property type="match status" value="1"/>
</dbReference>
<dbReference type="PROSITE" id="PS01033">
    <property type="entry name" value="GLOBIN"/>
    <property type="match status" value="1"/>
</dbReference>
<feature type="initiator methionine" description="Removed" evidence="2">
    <location>
        <position position="1"/>
    </location>
</feature>
<feature type="chain" id="PRO_0000053258" description="Hemoglobin subunit gamma">
    <location>
        <begin position="2"/>
        <end position="147"/>
    </location>
</feature>
<feature type="domain" description="Globin" evidence="1">
    <location>
        <begin position="3"/>
        <end position="147"/>
    </location>
</feature>
<feature type="binding site" description="distal binding residue" evidence="1">
    <location>
        <position position="64"/>
    </location>
    <ligand>
        <name>heme b</name>
        <dbReference type="ChEBI" id="CHEBI:60344"/>
    </ligand>
    <ligandPart>
        <name>Fe</name>
        <dbReference type="ChEBI" id="CHEBI:18248"/>
    </ligandPart>
</feature>
<feature type="binding site" description="proximal binding residue" evidence="1">
    <location>
        <position position="93"/>
    </location>
    <ligand>
        <name>heme b</name>
        <dbReference type="ChEBI" id="CHEBI:60344"/>
    </ligand>
    <ligandPart>
        <name>Fe</name>
        <dbReference type="ChEBI" id="CHEBI:18248"/>
    </ligandPart>
</feature>
<proteinExistence type="evidence at protein level"/>
<keyword id="KW-0903">Direct protein sequencing</keyword>
<keyword id="KW-0349">Heme</keyword>
<keyword id="KW-0408">Iron</keyword>
<keyword id="KW-0479">Metal-binding</keyword>
<keyword id="KW-0561">Oxygen transport</keyword>
<keyword id="KW-0813">Transport</keyword>